<proteinExistence type="inferred from homology"/>
<organism>
    <name type="scientific">Geobacter sulfurreducens (strain ATCC 51573 / DSM 12127 / PCA)</name>
    <dbReference type="NCBI Taxonomy" id="243231"/>
    <lineage>
        <taxon>Bacteria</taxon>
        <taxon>Pseudomonadati</taxon>
        <taxon>Thermodesulfobacteriota</taxon>
        <taxon>Desulfuromonadia</taxon>
        <taxon>Geobacterales</taxon>
        <taxon>Geobacteraceae</taxon>
        <taxon>Geobacter</taxon>
    </lineage>
</organism>
<evidence type="ECO:0000255" key="1">
    <source>
        <dbReference type="HAMAP-Rule" id="MF_00036"/>
    </source>
</evidence>
<accession>P61701</accession>
<name>SYA_GEOSL</name>
<dbReference type="EC" id="6.1.1.7" evidence="1"/>
<dbReference type="EMBL" id="AE017180">
    <property type="protein sequence ID" value="AAR33483.1"/>
    <property type="molecule type" value="Genomic_DNA"/>
</dbReference>
<dbReference type="RefSeq" id="NP_951210.1">
    <property type="nucleotide sequence ID" value="NC_002939.5"/>
</dbReference>
<dbReference type="RefSeq" id="WP_010940824.1">
    <property type="nucleotide sequence ID" value="NC_002939.5"/>
</dbReference>
<dbReference type="SMR" id="P61701"/>
<dbReference type="FunCoup" id="P61701">
    <property type="interactions" value="572"/>
</dbReference>
<dbReference type="STRING" id="243231.GSU0148"/>
<dbReference type="EnsemblBacteria" id="AAR33483">
    <property type="protein sequence ID" value="AAR33483"/>
    <property type="gene ID" value="GSU0148"/>
</dbReference>
<dbReference type="KEGG" id="gsu:GSU0148"/>
<dbReference type="PATRIC" id="fig|243231.5.peg.149"/>
<dbReference type="eggNOG" id="COG0013">
    <property type="taxonomic scope" value="Bacteria"/>
</dbReference>
<dbReference type="HOGENOM" id="CLU_004485_1_1_7"/>
<dbReference type="InParanoid" id="P61701"/>
<dbReference type="OrthoDB" id="9803884at2"/>
<dbReference type="Proteomes" id="UP000000577">
    <property type="component" value="Chromosome"/>
</dbReference>
<dbReference type="GO" id="GO:0005829">
    <property type="term" value="C:cytosol"/>
    <property type="evidence" value="ECO:0000318"/>
    <property type="project" value="GO_Central"/>
</dbReference>
<dbReference type="GO" id="GO:0004813">
    <property type="term" value="F:alanine-tRNA ligase activity"/>
    <property type="evidence" value="ECO:0000318"/>
    <property type="project" value="GO_Central"/>
</dbReference>
<dbReference type="GO" id="GO:0002161">
    <property type="term" value="F:aminoacyl-tRNA deacylase activity"/>
    <property type="evidence" value="ECO:0000318"/>
    <property type="project" value="GO_Central"/>
</dbReference>
<dbReference type="GO" id="GO:0005524">
    <property type="term" value="F:ATP binding"/>
    <property type="evidence" value="ECO:0007669"/>
    <property type="project" value="UniProtKB-UniRule"/>
</dbReference>
<dbReference type="GO" id="GO:0000049">
    <property type="term" value="F:tRNA binding"/>
    <property type="evidence" value="ECO:0007669"/>
    <property type="project" value="UniProtKB-KW"/>
</dbReference>
<dbReference type="GO" id="GO:0008270">
    <property type="term" value="F:zinc ion binding"/>
    <property type="evidence" value="ECO:0007669"/>
    <property type="project" value="UniProtKB-UniRule"/>
</dbReference>
<dbReference type="GO" id="GO:0006419">
    <property type="term" value="P:alanyl-tRNA aminoacylation"/>
    <property type="evidence" value="ECO:0000318"/>
    <property type="project" value="GO_Central"/>
</dbReference>
<dbReference type="GO" id="GO:0045892">
    <property type="term" value="P:negative regulation of DNA-templated transcription"/>
    <property type="evidence" value="ECO:0000318"/>
    <property type="project" value="GO_Central"/>
</dbReference>
<dbReference type="CDD" id="cd00673">
    <property type="entry name" value="AlaRS_core"/>
    <property type="match status" value="1"/>
</dbReference>
<dbReference type="FunFam" id="3.10.310.40:FF:000001">
    <property type="entry name" value="Alanine--tRNA ligase"/>
    <property type="match status" value="1"/>
</dbReference>
<dbReference type="FunFam" id="3.30.54.20:FF:000001">
    <property type="entry name" value="Alanine--tRNA ligase"/>
    <property type="match status" value="1"/>
</dbReference>
<dbReference type="FunFam" id="3.30.930.10:FF:000004">
    <property type="entry name" value="Alanine--tRNA ligase"/>
    <property type="match status" value="1"/>
</dbReference>
<dbReference type="FunFam" id="3.30.980.10:FF:000004">
    <property type="entry name" value="Alanine--tRNA ligase, cytoplasmic"/>
    <property type="match status" value="1"/>
</dbReference>
<dbReference type="Gene3D" id="2.40.30.130">
    <property type="match status" value="1"/>
</dbReference>
<dbReference type="Gene3D" id="3.10.310.40">
    <property type="match status" value="1"/>
</dbReference>
<dbReference type="Gene3D" id="3.30.54.20">
    <property type="match status" value="1"/>
</dbReference>
<dbReference type="Gene3D" id="6.10.250.550">
    <property type="match status" value="1"/>
</dbReference>
<dbReference type="Gene3D" id="3.30.930.10">
    <property type="entry name" value="Bira Bifunctional Protein, Domain 2"/>
    <property type="match status" value="1"/>
</dbReference>
<dbReference type="Gene3D" id="3.30.980.10">
    <property type="entry name" value="Threonyl-trna Synthetase, Chain A, domain 2"/>
    <property type="match status" value="1"/>
</dbReference>
<dbReference type="HAMAP" id="MF_00036_B">
    <property type="entry name" value="Ala_tRNA_synth_B"/>
    <property type="match status" value="1"/>
</dbReference>
<dbReference type="InterPro" id="IPR045864">
    <property type="entry name" value="aa-tRNA-synth_II/BPL/LPL"/>
</dbReference>
<dbReference type="InterPro" id="IPR002318">
    <property type="entry name" value="Ala-tRNA-lgiase_IIc"/>
</dbReference>
<dbReference type="InterPro" id="IPR018162">
    <property type="entry name" value="Ala-tRNA-ligase_IIc_anticod-bd"/>
</dbReference>
<dbReference type="InterPro" id="IPR018165">
    <property type="entry name" value="Ala-tRNA-synth_IIc_core"/>
</dbReference>
<dbReference type="InterPro" id="IPR018164">
    <property type="entry name" value="Ala-tRNA-synth_IIc_N"/>
</dbReference>
<dbReference type="InterPro" id="IPR050058">
    <property type="entry name" value="Ala-tRNA_ligase"/>
</dbReference>
<dbReference type="InterPro" id="IPR023033">
    <property type="entry name" value="Ala_tRNA_ligase_euk/bac"/>
</dbReference>
<dbReference type="InterPro" id="IPR003156">
    <property type="entry name" value="DHHA1_dom"/>
</dbReference>
<dbReference type="InterPro" id="IPR018163">
    <property type="entry name" value="Thr/Ala-tRNA-synth_IIc_edit"/>
</dbReference>
<dbReference type="InterPro" id="IPR009000">
    <property type="entry name" value="Transl_B-barrel_sf"/>
</dbReference>
<dbReference type="InterPro" id="IPR012947">
    <property type="entry name" value="tRNA_SAD"/>
</dbReference>
<dbReference type="NCBIfam" id="TIGR00344">
    <property type="entry name" value="alaS"/>
    <property type="match status" value="1"/>
</dbReference>
<dbReference type="PANTHER" id="PTHR11777:SF9">
    <property type="entry name" value="ALANINE--TRNA LIGASE, CYTOPLASMIC"/>
    <property type="match status" value="1"/>
</dbReference>
<dbReference type="PANTHER" id="PTHR11777">
    <property type="entry name" value="ALANYL-TRNA SYNTHETASE"/>
    <property type="match status" value="1"/>
</dbReference>
<dbReference type="Pfam" id="PF02272">
    <property type="entry name" value="DHHA1"/>
    <property type="match status" value="1"/>
</dbReference>
<dbReference type="Pfam" id="PF01411">
    <property type="entry name" value="tRNA-synt_2c"/>
    <property type="match status" value="1"/>
</dbReference>
<dbReference type="Pfam" id="PF07973">
    <property type="entry name" value="tRNA_SAD"/>
    <property type="match status" value="1"/>
</dbReference>
<dbReference type="PRINTS" id="PR00980">
    <property type="entry name" value="TRNASYNTHALA"/>
</dbReference>
<dbReference type="SMART" id="SM00863">
    <property type="entry name" value="tRNA_SAD"/>
    <property type="match status" value="1"/>
</dbReference>
<dbReference type="SUPFAM" id="SSF55681">
    <property type="entry name" value="Class II aaRS and biotin synthetases"/>
    <property type="match status" value="1"/>
</dbReference>
<dbReference type="SUPFAM" id="SSF101353">
    <property type="entry name" value="Putative anticodon-binding domain of alanyl-tRNA synthetase (AlaRS)"/>
    <property type="match status" value="1"/>
</dbReference>
<dbReference type="SUPFAM" id="SSF55186">
    <property type="entry name" value="ThrRS/AlaRS common domain"/>
    <property type="match status" value="1"/>
</dbReference>
<dbReference type="SUPFAM" id="SSF50447">
    <property type="entry name" value="Translation proteins"/>
    <property type="match status" value="1"/>
</dbReference>
<dbReference type="PROSITE" id="PS50860">
    <property type="entry name" value="AA_TRNA_LIGASE_II_ALA"/>
    <property type="match status" value="1"/>
</dbReference>
<keyword id="KW-0030">Aminoacyl-tRNA synthetase</keyword>
<keyword id="KW-0067">ATP-binding</keyword>
<keyword id="KW-0963">Cytoplasm</keyword>
<keyword id="KW-0436">Ligase</keyword>
<keyword id="KW-0479">Metal-binding</keyword>
<keyword id="KW-0547">Nucleotide-binding</keyword>
<keyword id="KW-0648">Protein biosynthesis</keyword>
<keyword id="KW-1185">Reference proteome</keyword>
<keyword id="KW-0694">RNA-binding</keyword>
<keyword id="KW-0820">tRNA-binding</keyword>
<keyword id="KW-0862">Zinc</keyword>
<sequence>MTGKEIRARFLKFFADRGHAVVPSSPLIPHNDPTLLFANAGMNQFKDCFLGLEKRDYVRACSSQKCVRAGGKHNDLENVGRTARHHTFFEMLGNFSFGDYFKKEAIAFAWEFLTKDLGLDKDRLYVTVYTDDDEAADIWHLQEGVPRERIYRFGEKDNFWAMGDTGPCGPCSEIFWDNGPEVGCGSPDCAVGCDCDRYMEIWNNVFMQFNRSADGVLTPLPKPSVDTGMGLERISTVMQGVKSNYDTDLFQGIIGHVEKLSGKRYRHSEKDDVSMRVMADHVRATTFLICDGVLPSNEGRGYVLRRIMRRAARHAKMLGFAEPVICRMVEAVNAMMGDAYPELLEREEYIRKVIRAEEERFAETLDRGLAILNEAVADLKNEGRTVIPGETLFRLYDTFGFPTDLTADIVRSEGFTIDEDGFEACMERQREQAREHWKGSGEEGIAEVHKTLHSRGVRSRFTGYEARTAYSPVTVLLKGGAEVAEATAGDRVEIITDATPFYGESGGQVGDTGTISTGSAHVEVTETLRPFPDLIVHRGTVVEGTIRQGDACDLKVAPGRDATARNHTATHLLQSALRQVLGDHVKQSGSLVGPDRLRFDFTHFAAMTPEEIRRVEEIVNSCIMANDDVHAREMALDEAMEIGATALFGEKYGDTVRVVRVGEVSMELCGGTHVHAAGDIGFFKILSEAGIAAGVRRIEALTGMGALRHVQQLEDERKEIAALIKAEGGDNVERLQRLLTRQKDMQREIETLESRLNAARSADLLADVREVNGVKVLATLAEVDDPKKLRELADTLKDRLGSGVVALGCVKEGKANLLVAVTKDLTGRVKAGDLIRQLSPIIGGSGGGKPELAQAGGTLPDKLGEALGKVCELVP</sequence>
<protein>
    <recommendedName>
        <fullName evidence="1">Alanine--tRNA ligase</fullName>
        <ecNumber evidence="1">6.1.1.7</ecNumber>
    </recommendedName>
    <alternativeName>
        <fullName evidence="1">Alanyl-tRNA synthetase</fullName>
        <shortName evidence="1">AlaRS</shortName>
    </alternativeName>
</protein>
<feature type="chain" id="PRO_0000075118" description="Alanine--tRNA ligase">
    <location>
        <begin position="1"/>
        <end position="875"/>
    </location>
</feature>
<feature type="binding site" evidence="1">
    <location>
        <position position="567"/>
    </location>
    <ligand>
        <name>Zn(2+)</name>
        <dbReference type="ChEBI" id="CHEBI:29105"/>
    </ligand>
</feature>
<feature type="binding site" evidence="1">
    <location>
        <position position="571"/>
    </location>
    <ligand>
        <name>Zn(2+)</name>
        <dbReference type="ChEBI" id="CHEBI:29105"/>
    </ligand>
</feature>
<feature type="binding site" evidence="1">
    <location>
        <position position="669"/>
    </location>
    <ligand>
        <name>Zn(2+)</name>
        <dbReference type="ChEBI" id="CHEBI:29105"/>
    </ligand>
</feature>
<feature type="binding site" evidence="1">
    <location>
        <position position="673"/>
    </location>
    <ligand>
        <name>Zn(2+)</name>
        <dbReference type="ChEBI" id="CHEBI:29105"/>
    </ligand>
</feature>
<comment type="function">
    <text evidence="1">Catalyzes the attachment of alanine to tRNA(Ala) in a two-step reaction: alanine is first activated by ATP to form Ala-AMP and then transferred to the acceptor end of tRNA(Ala). Also edits incorrectly charged Ser-tRNA(Ala) and Gly-tRNA(Ala) via its editing domain.</text>
</comment>
<comment type="catalytic activity">
    <reaction evidence="1">
        <text>tRNA(Ala) + L-alanine + ATP = L-alanyl-tRNA(Ala) + AMP + diphosphate</text>
        <dbReference type="Rhea" id="RHEA:12540"/>
        <dbReference type="Rhea" id="RHEA-COMP:9657"/>
        <dbReference type="Rhea" id="RHEA-COMP:9923"/>
        <dbReference type="ChEBI" id="CHEBI:30616"/>
        <dbReference type="ChEBI" id="CHEBI:33019"/>
        <dbReference type="ChEBI" id="CHEBI:57972"/>
        <dbReference type="ChEBI" id="CHEBI:78442"/>
        <dbReference type="ChEBI" id="CHEBI:78497"/>
        <dbReference type="ChEBI" id="CHEBI:456215"/>
        <dbReference type="EC" id="6.1.1.7"/>
    </reaction>
</comment>
<comment type="cofactor">
    <cofactor evidence="1">
        <name>Zn(2+)</name>
        <dbReference type="ChEBI" id="CHEBI:29105"/>
    </cofactor>
    <text evidence="1">Binds 1 zinc ion per subunit.</text>
</comment>
<comment type="subcellular location">
    <subcellularLocation>
        <location evidence="1">Cytoplasm</location>
    </subcellularLocation>
</comment>
<comment type="domain">
    <text evidence="1">Consists of three domains; the N-terminal catalytic domain, the editing domain and the C-terminal C-Ala domain. The editing domain removes incorrectly charged amino acids, while the C-Ala domain, along with tRNA(Ala), serves as a bridge to cooperatively bring together the editing and aminoacylation centers thus stimulating deacylation of misacylated tRNAs.</text>
</comment>
<comment type="similarity">
    <text evidence="1">Belongs to the class-II aminoacyl-tRNA synthetase family.</text>
</comment>
<reference key="1">
    <citation type="journal article" date="2003" name="Science">
        <title>Genome of Geobacter sulfurreducens: metal reduction in subsurface environments.</title>
        <authorList>
            <person name="Methe B.A."/>
            <person name="Nelson K.E."/>
            <person name="Eisen J.A."/>
            <person name="Paulsen I.T."/>
            <person name="Nelson W.C."/>
            <person name="Heidelberg J.F."/>
            <person name="Wu D."/>
            <person name="Wu M."/>
            <person name="Ward N.L."/>
            <person name="Beanan M.J."/>
            <person name="Dodson R.J."/>
            <person name="Madupu R."/>
            <person name="Brinkac L.M."/>
            <person name="Daugherty S.C."/>
            <person name="DeBoy R.T."/>
            <person name="Durkin A.S."/>
            <person name="Gwinn M.L."/>
            <person name="Kolonay J.F."/>
            <person name="Sullivan S.A."/>
            <person name="Haft D.H."/>
            <person name="Selengut J."/>
            <person name="Davidsen T.M."/>
            <person name="Zafar N."/>
            <person name="White O."/>
            <person name="Tran B."/>
            <person name="Romero C."/>
            <person name="Forberger H.A."/>
            <person name="Weidman J.F."/>
            <person name="Khouri H.M."/>
            <person name="Feldblyum T.V."/>
            <person name="Utterback T.R."/>
            <person name="Van Aken S.E."/>
            <person name="Lovley D.R."/>
            <person name="Fraser C.M."/>
        </authorList>
    </citation>
    <scope>NUCLEOTIDE SEQUENCE [LARGE SCALE GENOMIC DNA]</scope>
    <source>
        <strain>ATCC 51573 / DSM 12127 / PCA</strain>
    </source>
</reference>
<gene>
    <name evidence="1" type="primary">alaS</name>
    <name type="ordered locus">GSU0148</name>
</gene>